<keyword id="KW-0028">Amino-acid biosynthesis</keyword>
<keyword id="KW-0368">Histidine biosynthesis</keyword>
<keyword id="KW-0378">Hydrolase</keyword>
<keyword id="KW-0486">Methionine biosynthesis</keyword>
<keyword id="KW-0511">Multifunctional enzyme</keyword>
<keyword id="KW-0521">NADP</keyword>
<keyword id="KW-0554">One-carbon metabolism</keyword>
<keyword id="KW-0560">Oxidoreductase</keyword>
<keyword id="KW-0658">Purine biosynthesis</keyword>
<accession>Q987T6</accession>
<protein>
    <recommendedName>
        <fullName evidence="1">Bifunctional protein FolD 2</fullName>
    </recommendedName>
    <domain>
        <recommendedName>
            <fullName evidence="1">Methylenetetrahydrofolate dehydrogenase</fullName>
            <ecNumber evidence="1">1.5.1.5</ecNumber>
        </recommendedName>
    </domain>
    <domain>
        <recommendedName>
            <fullName evidence="1">Methenyltetrahydrofolate cyclohydrolase</fullName>
            <ecNumber evidence="1">3.5.4.9</ecNumber>
        </recommendedName>
    </domain>
</protein>
<feature type="chain" id="PRO_0000268464" description="Bifunctional protein FolD 2">
    <location>
        <begin position="1"/>
        <end position="306"/>
    </location>
</feature>
<feature type="binding site" evidence="1">
    <location>
        <begin position="169"/>
        <end position="171"/>
    </location>
    <ligand>
        <name>NADP(+)</name>
        <dbReference type="ChEBI" id="CHEBI:58349"/>
    </ligand>
</feature>
<feature type="binding site" evidence="1">
    <location>
        <position position="235"/>
    </location>
    <ligand>
        <name>NADP(+)</name>
        <dbReference type="ChEBI" id="CHEBI:58349"/>
    </ligand>
</feature>
<dbReference type="EC" id="1.5.1.5" evidence="1"/>
<dbReference type="EC" id="3.5.4.9" evidence="1"/>
<dbReference type="EMBL" id="BA000012">
    <property type="protein sequence ID" value="BAB53114.1"/>
    <property type="molecule type" value="Genomic_DNA"/>
</dbReference>
<dbReference type="RefSeq" id="WP_010914424.1">
    <property type="nucleotide sequence ID" value="NC_002678.2"/>
</dbReference>
<dbReference type="SMR" id="Q987T6"/>
<dbReference type="KEGG" id="mlo:mll6921"/>
<dbReference type="PATRIC" id="fig|266835.9.peg.5504"/>
<dbReference type="eggNOG" id="COG0190">
    <property type="taxonomic scope" value="Bacteria"/>
</dbReference>
<dbReference type="HOGENOM" id="CLU_034045_2_1_5"/>
<dbReference type="UniPathway" id="UPA00193"/>
<dbReference type="Proteomes" id="UP000000552">
    <property type="component" value="Chromosome"/>
</dbReference>
<dbReference type="GO" id="GO:0005829">
    <property type="term" value="C:cytosol"/>
    <property type="evidence" value="ECO:0007669"/>
    <property type="project" value="TreeGrafter"/>
</dbReference>
<dbReference type="GO" id="GO:0004477">
    <property type="term" value="F:methenyltetrahydrofolate cyclohydrolase activity"/>
    <property type="evidence" value="ECO:0007669"/>
    <property type="project" value="UniProtKB-UniRule"/>
</dbReference>
<dbReference type="GO" id="GO:0004488">
    <property type="term" value="F:methylenetetrahydrofolate dehydrogenase (NADP+) activity"/>
    <property type="evidence" value="ECO:0007669"/>
    <property type="project" value="UniProtKB-UniRule"/>
</dbReference>
<dbReference type="GO" id="GO:0000105">
    <property type="term" value="P:L-histidine biosynthetic process"/>
    <property type="evidence" value="ECO:0007669"/>
    <property type="project" value="UniProtKB-KW"/>
</dbReference>
<dbReference type="GO" id="GO:0009086">
    <property type="term" value="P:methionine biosynthetic process"/>
    <property type="evidence" value="ECO:0007669"/>
    <property type="project" value="UniProtKB-KW"/>
</dbReference>
<dbReference type="GO" id="GO:0006164">
    <property type="term" value="P:purine nucleotide biosynthetic process"/>
    <property type="evidence" value="ECO:0007669"/>
    <property type="project" value="UniProtKB-KW"/>
</dbReference>
<dbReference type="GO" id="GO:0035999">
    <property type="term" value="P:tetrahydrofolate interconversion"/>
    <property type="evidence" value="ECO:0007669"/>
    <property type="project" value="UniProtKB-UniRule"/>
</dbReference>
<dbReference type="CDD" id="cd01080">
    <property type="entry name" value="NAD_bind_m-THF_DH_Cyclohyd"/>
    <property type="match status" value="1"/>
</dbReference>
<dbReference type="FunFam" id="3.40.50.720:FF:000006">
    <property type="entry name" value="Bifunctional protein FolD"/>
    <property type="match status" value="1"/>
</dbReference>
<dbReference type="Gene3D" id="3.40.50.10860">
    <property type="entry name" value="Leucine Dehydrogenase, chain A, domain 1"/>
    <property type="match status" value="1"/>
</dbReference>
<dbReference type="Gene3D" id="3.40.50.720">
    <property type="entry name" value="NAD(P)-binding Rossmann-like Domain"/>
    <property type="match status" value="1"/>
</dbReference>
<dbReference type="HAMAP" id="MF_01576">
    <property type="entry name" value="THF_DHG_CYH"/>
    <property type="match status" value="1"/>
</dbReference>
<dbReference type="InterPro" id="IPR046346">
    <property type="entry name" value="Aminoacid_DH-like_N_sf"/>
</dbReference>
<dbReference type="InterPro" id="IPR036291">
    <property type="entry name" value="NAD(P)-bd_dom_sf"/>
</dbReference>
<dbReference type="InterPro" id="IPR000672">
    <property type="entry name" value="THF_DH/CycHdrlase"/>
</dbReference>
<dbReference type="InterPro" id="IPR020630">
    <property type="entry name" value="THF_DH/CycHdrlase_cat_dom"/>
</dbReference>
<dbReference type="InterPro" id="IPR020867">
    <property type="entry name" value="THF_DH/CycHdrlase_CS"/>
</dbReference>
<dbReference type="InterPro" id="IPR020631">
    <property type="entry name" value="THF_DH/CycHdrlase_NAD-bd_dom"/>
</dbReference>
<dbReference type="PANTHER" id="PTHR48099:SF5">
    <property type="entry name" value="C-1-TETRAHYDROFOLATE SYNTHASE, CYTOPLASMIC"/>
    <property type="match status" value="1"/>
</dbReference>
<dbReference type="PANTHER" id="PTHR48099">
    <property type="entry name" value="C-1-TETRAHYDROFOLATE SYNTHASE, CYTOPLASMIC-RELATED"/>
    <property type="match status" value="1"/>
</dbReference>
<dbReference type="Pfam" id="PF00763">
    <property type="entry name" value="THF_DHG_CYH"/>
    <property type="match status" value="1"/>
</dbReference>
<dbReference type="Pfam" id="PF02882">
    <property type="entry name" value="THF_DHG_CYH_C"/>
    <property type="match status" value="1"/>
</dbReference>
<dbReference type="PRINTS" id="PR00085">
    <property type="entry name" value="THFDHDRGNASE"/>
</dbReference>
<dbReference type="SUPFAM" id="SSF53223">
    <property type="entry name" value="Aminoacid dehydrogenase-like, N-terminal domain"/>
    <property type="match status" value="1"/>
</dbReference>
<dbReference type="SUPFAM" id="SSF51735">
    <property type="entry name" value="NAD(P)-binding Rossmann-fold domains"/>
    <property type="match status" value="1"/>
</dbReference>
<dbReference type="PROSITE" id="PS00767">
    <property type="entry name" value="THF_DHG_CYH_2"/>
    <property type="match status" value="1"/>
</dbReference>
<sequence>MSLPDDSRYLKGGPVAQRIIAAVREDAAIAKAEGFPPKLISITVGDTDAVDVYVRNQRAKAQLAGIDFEERRFPATITSGELEAAIHGLNADPRVTGIIIQRPVPAHISVKTLQAAVHPLKDVEGMHPASIGNIVYNQLDLAPCTAAASVELLKETGLDLKGLEVVVVGHSEIVGKPIAFLLMSEGATVTVCHHLTRSVAAHARRADALFVAVGKPRLIKADMVKPGAAVIDIGINSEIGPDGTSRIVGDVDTDSVKDVASWITPVPGGVGPITVAILLRNTMVALSRQRALYEATYGTADRLAAE</sequence>
<gene>
    <name evidence="1" type="primary">folD2</name>
    <name type="ordered locus">mll6921</name>
</gene>
<comment type="function">
    <text evidence="1">Catalyzes the oxidation of 5,10-methylenetetrahydrofolate to 5,10-methenyltetrahydrofolate and then the hydrolysis of 5,10-methenyltetrahydrofolate to 10-formyltetrahydrofolate.</text>
</comment>
<comment type="catalytic activity">
    <reaction evidence="1">
        <text>(6R)-5,10-methylene-5,6,7,8-tetrahydrofolate + NADP(+) = (6R)-5,10-methenyltetrahydrofolate + NADPH</text>
        <dbReference type="Rhea" id="RHEA:22812"/>
        <dbReference type="ChEBI" id="CHEBI:15636"/>
        <dbReference type="ChEBI" id="CHEBI:57455"/>
        <dbReference type="ChEBI" id="CHEBI:57783"/>
        <dbReference type="ChEBI" id="CHEBI:58349"/>
        <dbReference type="EC" id="1.5.1.5"/>
    </reaction>
</comment>
<comment type="catalytic activity">
    <reaction evidence="1">
        <text>(6R)-5,10-methenyltetrahydrofolate + H2O = (6R)-10-formyltetrahydrofolate + H(+)</text>
        <dbReference type="Rhea" id="RHEA:23700"/>
        <dbReference type="ChEBI" id="CHEBI:15377"/>
        <dbReference type="ChEBI" id="CHEBI:15378"/>
        <dbReference type="ChEBI" id="CHEBI:57455"/>
        <dbReference type="ChEBI" id="CHEBI:195366"/>
        <dbReference type="EC" id="3.5.4.9"/>
    </reaction>
</comment>
<comment type="pathway">
    <text evidence="1">One-carbon metabolism; tetrahydrofolate interconversion.</text>
</comment>
<comment type="subunit">
    <text evidence="1">Homodimer.</text>
</comment>
<comment type="similarity">
    <text evidence="1">Belongs to the tetrahydrofolate dehydrogenase/cyclohydrolase family.</text>
</comment>
<reference key="1">
    <citation type="journal article" date="2000" name="DNA Res.">
        <title>Complete genome structure of the nitrogen-fixing symbiotic bacterium Mesorhizobium loti.</title>
        <authorList>
            <person name="Kaneko T."/>
            <person name="Nakamura Y."/>
            <person name="Sato S."/>
            <person name="Asamizu E."/>
            <person name="Kato T."/>
            <person name="Sasamoto S."/>
            <person name="Watanabe A."/>
            <person name="Idesawa K."/>
            <person name="Ishikawa A."/>
            <person name="Kawashima K."/>
            <person name="Kimura T."/>
            <person name="Kishida Y."/>
            <person name="Kiyokawa C."/>
            <person name="Kohara M."/>
            <person name="Matsumoto M."/>
            <person name="Matsuno A."/>
            <person name="Mochizuki Y."/>
            <person name="Nakayama S."/>
            <person name="Nakazaki N."/>
            <person name="Shimpo S."/>
            <person name="Sugimoto M."/>
            <person name="Takeuchi C."/>
            <person name="Yamada M."/>
            <person name="Tabata S."/>
        </authorList>
    </citation>
    <scope>NUCLEOTIDE SEQUENCE [LARGE SCALE GENOMIC DNA]</scope>
    <source>
        <strain>LMG 29417 / CECT 9101 / MAFF 303099</strain>
    </source>
</reference>
<proteinExistence type="inferred from homology"/>
<evidence type="ECO:0000255" key="1">
    <source>
        <dbReference type="HAMAP-Rule" id="MF_01576"/>
    </source>
</evidence>
<organism>
    <name type="scientific">Mesorhizobium japonicum (strain LMG 29417 / CECT 9101 / MAFF 303099)</name>
    <name type="common">Mesorhizobium loti (strain MAFF 303099)</name>
    <dbReference type="NCBI Taxonomy" id="266835"/>
    <lineage>
        <taxon>Bacteria</taxon>
        <taxon>Pseudomonadati</taxon>
        <taxon>Pseudomonadota</taxon>
        <taxon>Alphaproteobacteria</taxon>
        <taxon>Hyphomicrobiales</taxon>
        <taxon>Phyllobacteriaceae</taxon>
        <taxon>Mesorhizobium</taxon>
    </lineage>
</organism>
<name>FOLD2_RHILO</name>